<reference key="1">
    <citation type="journal article" date="2004" name="Nat. Biotechnol.">
        <title>Complete genome sequence of the metabolically versatile photosynthetic bacterium Rhodopseudomonas palustris.</title>
        <authorList>
            <person name="Larimer F.W."/>
            <person name="Chain P."/>
            <person name="Hauser L."/>
            <person name="Lamerdin J.E."/>
            <person name="Malfatti S."/>
            <person name="Do L."/>
            <person name="Land M.L."/>
            <person name="Pelletier D.A."/>
            <person name="Beatty J.T."/>
            <person name="Lang A.S."/>
            <person name="Tabita F.R."/>
            <person name="Gibson J.L."/>
            <person name="Hanson T.E."/>
            <person name="Bobst C."/>
            <person name="Torres y Torres J.L."/>
            <person name="Peres C."/>
            <person name="Harrison F.H."/>
            <person name="Gibson J."/>
            <person name="Harwood C.S."/>
        </authorList>
    </citation>
    <scope>NUCLEOTIDE SEQUENCE [LARGE SCALE GENOMIC DNA]</scope>
    <source>
        <strain>ATCC BAA-98 / CGA009</strain>
    </source>
</reference>
<organism>
    <name type="scientific">Rhodopseudomonas palustris (strain ATCC BAA-98 / CGA009)</name>
    <dbReference type="NCBI Taxonomy" id="258594"/>
    <lineage>
        <taxon>Bacteria</taxon>
        <taxon>Pseudomonadati</taxon>
        <taxon>Pseudomonadota</taxon>
        <taxon>Alphaproteobacteria</taxon>
        <taxon>Hyphomicrobiales</taxon>
        <taxon>Nitrobacteraceae</taxon>
        <taxon>Rhodopseudomonas</taxon>
    </lineage>
</organism>
<accession>P61616</accession>
<sequence length="309" mass="32951">MSFPDITPELKAAMPELRGRLLSNEPLAPLTWFRVGGPAQVLFTPADEDDLGYFLPRLPAEIPVMCLGLGSNLIVRDGGLPGVAIRLSPRGFGEHRVEGEMVHAGAAALDKRVAETAAAAQLGGLEFYYGIPGSIGGALRMNAGANGRETKDVLIDATAYDRSGTRKLFDNAAMQFSYRHSGADPALIFTSARLRGTPATPDHIRAKMNEVQAHRELAQPIREKTGGSTFKNPPGQSAWRLIDAAGCRGLKIGGAQVSEMHCNFLINTGEATAADIETLGETVRARVKAQSGVELQWEIKRIGVAPGKG</sequence>
<proteinExistence type="inferred from homology"/>
<protein>
    <recommendedName>
        <fullName evidence="1">UDP-N-acetylenolpyruvoylglucosamine reductase</fullName>
        <ecNumber evidence="1">1.3.1.98</ecNumber>
    </recommendedName>
    <alternativeName>
        <fullName evidence="1">UDP-N-acetylmuramate dehydrogenase</fullName>
    </alternativeName>
</protein>
<gene>
    <name evidence="1" type="primary">murB</name>
    <name type="ordered locus">RPA3528</name>
</gene>
<dbReference type="EC" id="1.3.1.98" evidence="1"/>
<dbReference type="EMBL" id="BX572604">
    <property type="protein sequence ID" value="CAE28969.1"/>
    <property type="status" value="ALT_INIT"/>
    <property type="molecule type" value="Genomic_DNA"/>
</dbReference>
<dbReference type="RefSeq" id="WP_042441207.1">
    <property type="nucleotide sequence ID" value="NZ_CP116810.1"/>
</dbReference>
<dbReference type="SMR" id="P61616"/>
<dbReference type="STRING" id="258594.RPA3528"/>
<dbReference type="GeneID" id="66894630"/>
<dbReference type="eggNOG" id="COG0812">
    <property type="taxonomic scope" value="Bacteria"/>
</dbReference>
<dbReference type="HOGENOM" id="CLU_035304_1_0_5"/>
<dbReference type="PhylomeDB" id="P61616"/>
<dbReference type="UniPathway" id="UPA00219"/>
<dbReference type="GO" id="GO:0005829">
    <property type="term" value="C:cytosol"/>
    <property type="evidence" value="ECO:0007669"/>
    <property type="project" value="TreeGrafter"/>
</dbReference>
<dbReference type="GO" id="GO:0071949">
    <property type="term" value="F:FAD binding"/>
    <property type="evidence" value="ECO:0007669"/>
    <property type="project" value="InterPro"/>
</dbReference>
<dbReference type="GO" id="GO:0008762">
    <property type="term" value="F:UDP-N-acetylmuramate dehydrogenase activity"/>
    <property type="evidence" value="ECO:0007669"/>
    <property type="project" value="UniProtKB-UniRule"/>
</dbReference>
<dbReference type="GO" id="GO:0051301">
    <property type="term" value="P:cell division"/>
    <property type="evidence" value="ECO:0007669"/>
    <property type="project" value="UniProtKB-KW"/>
</dbReference>
<dbReference type="GO" id="GO:0071555">
    <property type="term" value="P:cell wall organization"/>
    <property type="evidence" value="ECO:0007669"/>
    <property type="project" value="UniProtKB-KW"/>
</dbReference>
<dbReference type="GO" id="GO:0009252">
    <property type="term" value="P:peptidoglycan biosynthetic process"/>
    <property type="evidence" value="ECO:0007669"/>
    <property type="project" value="UniProtKB-UniRule"/>
</dbReference>
<dbReference type="GO" id="GO:0008360">
    <property type="term" value="P:regulation of cell shape"/>
    <property type="evidence" value="ECO:0007669"/>
    <property type="project" value="UniProtKB-KW"/>
</dbReference>
<dbReference type="Gene3D" id="3.30.465.10">
    <property type="match status" value="1"/>
</dbReference>
<dbReference type="Gene3D" id="3.90.78.10">
    <property type="entry name" value="UDP-N-acetylenolpyruvoylglucosamine reductase, C-terminal domain"/>
    <property type="match status" value="1"/>
</dbReference>
<dbReference type="Gene3D" id="3.30.43.10">
    <property type="entry name" value="Uridine Diphospho-n-acetylenolpyruvylglucosamine Reductase, domain 2"/>
    <property type="match status" value="1"/>
</dbReference>
<dbReference type="HAMAP" id="MF_00037">
    <property type="entry name" value="MurB"/>
    <property type="match status" value="1"/>
</dbReference>
<dbReference type="InterPro" id="IPR016166">
    <property type="entry name" value="FAD-bd_PCMH"/>
</dbReference>
<dbReference type="InterPro" id="IPR036318">
    <property type="entry name" value="FAD-bd_PCMH-like_sf"/>
</dbReference>
<dbReference type="InterPro" id="IPR016167">
    <property type="entry name" value="FAD-bd_PCMH_sub1"/>
</dbReference>
<dbReference type="InterPro" id="IPR016169">
    <property type="entry name" value="FAD-bd_PCMH_sub2"/>
</dbReference>
<dbReference type="InterPro" id="IPR003170">
    <property type="entry name" value="MurB"/>
</dbReference>
<dbReference type="InterPro" id="IPR011601">
    <property type="entry name" value="MurB_C"/>
</dbReference>
<dbReference type="InterPro" id="IPR036635">
    <property type="entry name" value="MurB_C_sf"/>
</dbReference>
<dbReference type="InterPro" id="IPR006094">
    <property type="entry name" value="Oxid_FAD_bind_N"/>
</dbReference>
<dbReference type="NCBIfam" id="TIGR00179">
    <property type="entry name" value="murB"/>
    <property type="match status" value="1"/>
</dbReference>
<dbReference type="NCBIfam" id="NF010480">
    <property type="entry name" value="PRK13905.1"/>
    <property type="match status" value="1"/>
</dbReference>
<dbReference type="PANTHER" id="PTHR21071">
    <property type="entry name" value="UDP-N-ACETYLENOLPYRUVOYLGLUCOSAMINE REDUCTASE"/>
    <property type="match status" value="1"/>
</dbReference>
<dbReference type="PANTHER" id="PTHR21071:SF4">
    <property type="entry name" value="UDP-N-ACETYLENOLPYRUVOYLGLUCOSAMINE REDUCTASE"/>
    <property type="match status" value="1"/>
</dbReference>
<dbReference type="Pfam" id="PF01565">
    <property type="entry name" value="FAD_binding_4"/>
    <property type="match status" value="1"/>
</dbReference>
<dbReference type="Pfam" id="PF02873">
    <property type="entry name" value="MurB_C"/>
    <property type="match status" value="1"/>
</dbReference>
<dbReference type="SUPFAM" id="SSF56176">
    <property type="entry name" value="FAD-binding/transporter-associated domain-like"/>
    <property type="match status" value="1"/>
</dbReference>
<dbReference type="SUPFAM" id="SSF56194">
    <property type="entry name" value="Uridine diphospho-N-Acetylenolpyruvylglucosamine reductase, MurB, C-terminal domain"/>
    <property type="match status" value="1"/>
</dbReference>
<dbReference type="PROSITE" id="PS51387">
    <property type="entry name" value="FAD_PCMH"/>
    <property type="match status" value="1"/>
</dbReference>
<evidence type="ECO:0000255" key="1">
    <source>
        <dbReference type="HAMAP-Rule" id="MF_00037"/>
    </source>
</evidence>
<evidence type="ECO:0000305" key="2"/>
<feature type="chain" id="PRO_0000179249" description="UDP-N-acetylenolpyruvoylglucosamine reductase">
    <location>
        <begin position="1"/>
        <end position="309"/>
    </location>
</feature>
<feature type="domain" description="FAD-binding PCMH-type" evidence="1">
    <location>
        <begin position="34"/>
        <end position="199"/>
    </location>
</feature>
<feature type="active site" evidence="1">
    <location>
        <position position="179"/>
    </location>
</feature>
<feature type="active site" description="Proton donor" evidence="1">
    <location>
        <position position="228"/>
    </location>
</feature>
<feature type="active site" evidence="1">
    <location>
        <position position="298"/>
    </location>
</feature>
<keyword id="KW-0131">Cell cycle</keyword>
<keyword id="KW-0132">Cell division</keyword>
<keyword id="KW-0133">Cell shape</keyword>
<keyword id="KW-0961">Cell wall biogenesis/degradation</keyword>
<keyword id="KW-0963">Cytoplasm</keyword>
<keyword id="KW-0274">FAD</keyword>
<keyword id="KW-0285">Flavoprotein</keyword>
<keyword id="KW-0521">NADP</keyword>
<keyword id="KW-0560">Oxidoreductase</keyword>
<keyword id="KW-0573">Peptidoglycan synthesis</keyword>
<name>MURB_RHOPA</name>
<comment type="function">
    <text evidence="1">Cell wall formation.</text>
</comment>
<comment type="catalytic activity">
    <reaction evidence="1">
        <text>UDP-N-acetyl-alpha-D-muramate + NADP(+) = UDP-N-acetyl-3-O-(1-carboxyvinyl)-alpha-D-glucosamine + NADPH + H(+)</text>
        <dbReference type="Rhea" id="RHEA:12248"/>
        <dbReference type="ChEBI" id="CHEBI:15378"/>
        <dbReference type="ChEBI" id="CHEBI:57783"/>
        <dbReference type="ChEBI" id="CHEBI:58349"/>
        <dbReference type="ChEBI" id="CHEBI:68483"/>
        <dbReference type="ChEBI" id="CHEBI:70757"/>
        <dbReference type="EC" id="1.3.1.98"/>
    </reaction>
</comment>
<comment type="cofactor">
    <cofactor evidence="1">
        <name>FAD</name>
        <dbReference type="ChEBI" id="CHEBI:57692"/>
    </cofactor>
</comment>
<comment type="pathway">
    <text evidence="1">Cell wall biogenesis; peptidoglycan biosynthesis.</text>
</comment>
<comment type="subcellular location">
    <subcellularLocation>
        <location evidence="1">Cytoplasm</location>
    </subcellularLocation>
</comment>
<comment type="similarity">
    <text evidence="1">Belongs to the MurB family.</text>
</comment>
<comment type="sequence caution" evidence="2">
    <conflict type="erroneous initiation">
        <sequence resource="EMBL-CDS" id="CAE28969"/>
    </conflict>
</comment>